<protein>
    <recommendedName>
        <fullName evidence="8">WRKY transcription factor WRKY71</fullName>
        <shortName evidence="8">OsWRKY71</shortName>
    </recommendedName>
</protein>
<name>WRK71_ORYSI</name>
<sequence length="348" mass="37258">MDPWISTQPSLSLDLRVGLPATAAVAMVKPKVLVEEDFFHQQPLKKDPEVAALEAELKRMGAENRQLSEMLAAVAAKYEALQSQFSDMVTASANNGGGGGNNQSSTSEGGSVSPSRKRKSESLDDSPPPPPPPHPHAAPHHMHVMPGAAAAGYADQTECTSGEPCKRIREECKPKISKLYVHADPSDLSLVVKDGYQWRKYGQKVTKDNPCPRAYFRCSFAPACPVKKKVQRSAEDNTILVATYEGEHNHGQPPPPLQSAAQNSDGSGKSAGKPPHAPAAAPPAPVVPHRQHEPVVVNGEQQAAAASEMIRRNLAEQMAMTLTRDPSFKAALVTALSGRILELSPTKD</sequence>
<reference key="1">
    <citation type="journal article" date="2004" name="Plant Physiol.">
        <title>A rice WRKY gene encodes a transcriptional repressor of the gibberellin signaling pathway in aleurone cells.</title>
        <authorList>
            <person name="Zhang Z.-L."/>
            <person name="Xie Z."/>
            <person name="Zou X."/>
            <person name="Casaretto J."/>
            <person name="Ho T.-H.D."/>
            <person name="Shen Q.J."/>
        </authorList>
    </citation>
    <scope>NUCLEOTIDE SEQUENCE [GENOMIC DNA]</scope>
    <scope>FUNCTION</scope>
    <scope>TISSUE SPECIFICITY</scope>
    <scope>SUBCELLULAR LOCATION</scope>
    <scope>REGULATION BY GIBBERELLIC ACID</scope>
</reference>
<reference key="2">
    <citation type="journal article" date="2007" name="J. Plant Physiol.">
        <title>OsWRKY71, a rice transcription factor, is involved in rice defense response.</title>
        <authorList>
            <person name="Liu X."/>
            <person name="Bai X."/>
            <person name="Wang X."/>
            <person name="Chu C."/>
        </authorList>
    </citation>
    <scope>NUCLEOTIDE SEQUENCE [MRNA]</scope>
    <scope>FUNCTION</scope>
    <scope>INDUCTION BY DEFENSE SIGNALING MOLECULES</scope>
    <scope>SUBCELLULAR LOCATION</scope>
    <scope>TISSUE SPECIFICITY</scope>
    <source>
        <strain>cv. Guang-Lu-Ai No.4</strain>
        <tissue>Leaf</tissue>
    </source>
</reference>
<reference key="3">
    <citation type="journal article" date="2005" name="PLoS Biol.">
        <title>The genomes of Oryza sativa: a history of duplications.</title>
        <authorList>
            <person name="Yu J."/>
            <person name="Wang J."/>
            <person name="Lin W."/>
            <person name="Li S."/>
            <person name="Li H."/>
            <person name="Zhou J."/>
            <person name="Ni P."/>
            <person name="Dong W."/>
            <person name="Hu S."/>
            <person name="Zeng C."/>
            <person name="Zhang J."/>
            <person name="Zhang Y."/>
            <person name="Li R."/>
            <person name="Xu Z."/>
            <person name="Li S."/>
            <person name="Li X."/>
            <person name="Zheng H."/>
            <person name="Cong L."/>
            <person name="Lin L."/>
            <person name="Yin J."/>
            <person name="Geng J."/>
            <person name="Li G."/>
            <person name="Shi J."/>
            <person name="Liu J."/>
            <person name="Lv H."/>
            <person name="Li J."/>
            <person name="Wang J."/>
            <person name="Deng Y."/>
            <person name="Ran L."/>
            <person name="Shi X."/>
            <person name="Wang X."/>
            <person name="Wu Q."/>
            <person name="Li C."/>
            <person name="Ren X."/>
            <person name="Wang J."/>
            <person name="Wang X."/>
            <person name="Li D."/>
            <person name="Liu D."/>
            <person name="Zhang X."/>
            <person name="Ji Z."/>
            <person name="Zhao W."/>
            <person name="Sun Y."/>
            <person name="Zhang Z."/>
            <person name="Bao J."/>
            <person name="Han Y."/>
            <person name="Dong L."/>
            <person name="Ji J."/>
            <person name="Chen P."/>
            <person name="Wu S."/>
            <person name="Liu J."/>
            <person name="Xiao Y."/>
            <person name="Bu D."/>
            <person name="Tan J."/>
            <person name="Yang L."/>
            <person name="Ye C."/>
            <person name="Zhang J."/>
            <person name="Xu J."/>
            <person name="Zhou Y."/>
            <person name="Yu Y."/>
            <person name="Zhang B."/>
            <person name="Zhuang S."/>
            <person name="Wei H."/>
            <person name="Liu B."/>
            <person name="Lei M."/>
            <person name="Yu H."/>
            <person name="Li Y."/>
            <person name="Xu H."/>
            <person name="Wei S."/>
            <person name="He X."/>
            <person name="Fang L."/>
            <person name="Zhang Z."/>
            <person name="Zhang Y."/>
            <person name="Huang X."/>
            <person name="Su Z."/>
            <person name="Tong W."/>
            <person name="Li J."/>
            <person name="Tong Z."/>
            <person name="Li S."/>
            <person name="Ye J."/>
            <person name="Wang L."/>
            <person name="Fang L."/>
            <person name="Lei T."/>
            <person name="Chen C.-S."/>
            <person name="Chen H.-C."/>
            <person name="Xu Z."/>
            <person name="Li H."/>
            <person name="Huang H."/>
            <person name="Zhang F."/>
            <person name="Xu H."/>
            <person name="Li N."/>
            <person name="Zhao C."/>
            <person name="Li S."/>
            <person name="Dong L."/>
            <person name="Huang Y."/>
            <person name="Li L."/>
            <person name="Xi Y."/>
            <person name="Qi Q."/>
            <person name="Li W."/>
            <person name="Zhang B."/>
            <person name="Hu W."/>
            <person name="Zhang Y."/>
            <person name="Tian X."/>
            <person name="Jiao Y."/>
            <person name="Liang X."/>
            <person name="Jin J."/>
            <person name="Gao L."/>
            <person name="Zheng W."/>
            <person name="Hao B."/>
            <person name="Liu S.-M."/>
            <person name="Wang W."/>
            <person name="Yuan L."/>
            <person name="Cao M."/>
            <person name="McDermott J."/>
            <person name="Samudrala R."/>
            <person name="Wang J."/>
            <person name="Wong G.K.-S."/>
            <person name="Yang H."/>
        </authorList>
    </citation>
    <scope>NUCLEOTIDE SEQUENCE [LARGE SCALE GENOMIC DNA]</scope>
    <source>
        <strain>cv. 93-11</strain>
    </source>
</reference>
<reference key="4">
    <citation type="journal article" date="2005" name="Plant Physiol.">
        <title>Annotations and functional analyses of the rice WRKY gene superfamily reveal positive and negative regulators of abscisic acid signaling in aleurone cells.</title>
        <authorList>
            <person name="Xie Z."/>
            <person name="Zhang Z.-L."/>
            <person name="Zou X."/>
            <person name="Huang J."/>
            <person name="Ruas P."/>
            <person name="Thompson D."/>
            <person name="Shen Q.J."/>
        </authorList>
    </citation>
    <scope>GENE FAMILY</scope>
    <scope>NOMENCLATURE</scope>
</reference>
<reference key="5">
    <citation type="journal article" date="2014" name="Biomed. Res. Int.">
        <title>Expression profiling of abiotic stress-inducible genes in response to multiple stresses in rice (Oryza sativa L.) varieties with contrasting level of stress tolerance.</title>
        <authorList>
            <person name="Basu S."/>
            <person name="Roychoudhury A."/>
        </authorList>
    </citation>
    <scope>INDUCTION BY ABA</scope>
    <source>
        <strain>cv. IR29</strain>
        <strain>cv. Pokkali</strain>
    </source>
</reference>
<keyword id="KW-0175">Coiled coil</keyword>
<keyword id="KW-0238">DNA-binding</keyword>
<keyword id="KW-0939">Gibberellin signaling pathway</keyword>
<keyword id="KW-0539">Nucleus</keyword>
<keyword id="KW-0611">Plant defense</keyword>
<keyword id="KW-1185">Reference proteome</keyword>
<keyword id="KW-0678">Repressor</keyword>
<keyword id="KW-0804">Transcription</keyword>
<keyword id="KW-0805">Transcription regulation</keyword>
<comment type="function">
    <text evidence="1 5 6">Transcription repressor. Interacts specifically with the W box (5'-(T)TGAC[CT]-3'), a frequently occurring elicitor-responsive cis-acting element. Represses specifically gibberellic acid (GA)-induced promoters in aleurone cells, probably by interfering with GAM1 (PubMed:15047897). Regulates, probably indirectly, the activation of defense-related genes such as GF14E during defense response (By similarity). Modulates plant innate immunity against X.oryzae pv. oryzae (Xoo) (By similarity). Confers resistance to the virulent bacterial pathogen X.oryzae pv. oryzae (Xoo) 13751, probably via the regulation of NPR1 and PR1b defense signaling pathways (PubMed:16919842).</text>
</comment>
<comment type="subunit">
    <text evidence="1">Interacts with WRKY51; this interaction promotes W box binding of the complex WRKY51/WRKY71 in a zinc ion-dependent manner.</text>
</comment>
<comment type="subcellular location">
    <subcellularLocation>
        <location evidence="3 5">Nucleus</location>
    </subcellularLocation>
    <text evidence="5">Localized in nuclei of aleurone cells.</text>
</comment>
<comment type="tissue specificity">
    <text evidence="5 6">Highly expressed in aleurone cells (PubMed:15047897). In seeds, predominantly present in the plumule, radicle and scutellum of the embryo. Expressed in roots, stems, young leaves and spikelets (PubMed:16919842).</text>
</comment>
<comment type="induction">
    <text evidence="1 5 6 7">Induced by biotic elicitors (e.g. fungal chitin oligosaccharide and fungal cerebroside elicitors) and pathogen infection (e.g. the compatible pathogenic fungus M.grisea race 007, M.grisea crabgrass BR29). Accumulates in response to M.oryzae (By similarity). Triggered by defense signaling molecules, such as salicylic acid (SA), methyl jasmonate (MeJA), 1-aminocyclo-propane-1-carboxylic acid (ACC), wounding and pathogen infection (e.g. X.oryzae) (PubMed:16919842). Repressed by gibberellic acid (GA) (at protein level) (PubMed:15047897). Induced by abscisic acid (ABA) in aleurone cells, roots and leaves (PubMed:25110688). Accumulates in response to uniconazole, a GA biosynthesis inhibitor. Triggered strongly by cold in leaves, stems and developing spikes, but moderately by drought and salt stresses (By similarity).</text>
</comment>
<comment type="domain">
    <text evidence="1">The WRKY domain (213-266) is required to bind DNA.</text>
</comment>
<comment type="domain">
    <text evidence="1">The C-terminal region (267-348) is required for the repressing activity on gibberellic acid (GA)-induced promoters.</text>
</comment>
<comment type="similarity">
    <text evidence="9">Belongs to the WRKY group II-a family.</text>
</comment>
<accession>Q6IEL0</accession>
<dbReference type="EMBL" id="BK005074">
    <property type="protein sequence ID" value="DAA05136.1"/>
    <property type="molecule type" value="Genomic_DNA"/>
</dbReference>
<dbReference type="EMBL" id="AY676927">
    <property type="protein sequence ID" value="AAT84158.1"/>
    <property type="molecule type" value="mRNA"/>
</dbReference>
<dbReference type="EMBL" id="CM000127">
    <property type="protein sequence ID" value="EAY84736.1"/>
    <property type="molecule type" value="Genomic_DNA"/>
</dbReference>
<dbReference type="SMR" id="Q6IEL0"/>
<dbReference type="STRING" id="39946.Q6IEL0"/>
<dbReference type="EnsemblPlants" id="BGIOSGA007670-TA">
    <property type="protein sequence ID" value="BGIOSGA007670-PA"/>
    <property type="gene ID" value="BGIOSGA007670"/>
</dbReference>
<dbReference type="EnsemblPlants" id="OsIR64_02g0006120.02">
    <property type="protein sequence ID" value="OsIR64_02g0006120.02"/>
    <property type="gene ID" value="OsIR64_02g0006120"/>
</dbReference>
<dbReference type="EnsemblPlants" id="OsLaMu_02g0006120.02">
    <property type="protein sequence ID" value="OsLaMu_02g0006120.02"/>
    <property type="gene ID" value="OsLaMu_02g0006120"/>
</dbReference>
<dbReference type="EnsemblPlants" id="OsLima_02g0006530.01">
    <property type="protein sequence ID" value="OsLima_02g0006530.01"/>
    <property type="gene ID" value="OsLima_02g0006530"/>
</dbReference>
<dbReference type="EnsemblPlants" id="OsLiXu_02g0006350.01">
    <property type="protein sequence ID" value="OsLiXu_02g0006350.01"/>
    <property type="gene ID" value="OsLiXu_02g0006350"/>
</dbReference>
<dbReference type="EnsemblPlants" id="OsLiXu_Ung0008090.01">
    <property type="protein sequence ID" value="OsLiXu_Ung0008090.01"/>
    <property type="gene ID" value="OsLiXu_Ung0008090"/>
</dbReference>
<dbReference type="EnsemblPlants" id="OsPr106_02g0006140.01">
    <property type="protein sequence ID" value="OsPr106_02g0006140.01"/>
    <property type="gene ID" value="OsPr106_02g0006140"/>
</dbReference>
<dbReference type="EnsemblPlants" id="OsZS97_02G006040_02">
    <property type="protein sequence ID" value="OsZS97_02G006040_02"/>
    <property type="gene ID" value="OsZS97_02G006040"/>
</dbReference>
<dbReference type="Gramene" id="BGIOSGA007670-TA">
    <property type="protein sequence ID" value="BGIOSGA007670-PA"/>
    <property type="gene ID" value="BGIOSGA007670"/>
</dbReference>
<dbReference type="Gramene" id="OsIR64_02g0006120.02">
    <property type="protein sequence ID" value="OsIR64_02g0006120.02"/>
    <property type="gene ID" value="OsIR64_02g0006120"/>
</dbReference>
<dbReference type="Gramene" id="OsLaMu_02g0006120.02">
    <property type="protein sequence ID" value="OsLaMu_02g0006120.02"/>
    <property type="gene ID" value="OsLaMu_02g0006120"/>
</dbReference>
<dbReference type="Gramene" id="OsLima_02g0006530.01">
    <property type="protein sequence ID" value="OsLima_02g0006530.01"/>
    <property type="gene ID" value="OsLima_02g0006530"/>
</dbReference>
<dbReference type="Gramene" id="OsLiXu_02g0006350.01">
    <property type="protein sequence ID" value="OsLiXu_02g0006350.01"/>
    <property type="gene ID" value="OsLiXu_02g0006350"/>
</dbReference>
<dbReference type="Gramene" id="OsLiXu_Ung0008090.01">
    <property type="protein sequence ID" value="OsLiXu_Ung0008090.01"/>
    <property type="gene ID" value="OsLiXu_Ung0008090"/>
</dbReference>
<dbReference type="Gramene" id="OsPr106_02g0006140.01">
    <property type="protein sequence ID" value="OsPr106_02g0006140.01"/>
    <property type="gene ID" value="OsPr106_02g0006140"/>
</dbReference>
<dbReference type="Gramene" id="OsZS97_02G006040_02">
    <property type="protein sequence ID" value="OsZS97_02G006040_02"/>
    <property type="gene ID" value="OsZS97_02G006040"/>
</dbReference>
<dbReference type="HOGENOM" id="CLU_047067_0_0_1"/>
<dbReference type="OMA" id="DPWIGSQ"/>
<dbReference type="Proteomes" id="UP000007015">
    <property type="component" value="Chromosome 2"/>
</dbReference>
<dbReference type="GO" id="GO:0005634">
    <property type="term" value="C:nucleus"/>
    <property type="evidence" value="ECO:0000314"/>
    <property type="project" value="Gramene"/>
</dbReference>
<dbReference type="GO" id="GO:0003700">
    <property type="term" value="F:DNA-binding transcription factor activity"/>
    <property type="evidence" value="ECO:0000314"/>
    <property type="project" value="Gramene"/>
</dbReference>
<dbReference type="GO" id="GO:1990841">
    <property type="term" value="F:promoter-specific chromatin binding"/>
    <property type="evidence" value="ECO:0000314"/>
    <property type="project" value="UniProtKB"/>
</dbReference>
<dbReference type="GO" id="GO:0043565">
    <property type="term" value="F:sequence-specific DNA binding"/>
    <property type="evidence" value="ECO:0007669"/>
    <property type="project" value="InterPro"/>
</dbReference>
<dbReference type="GO" id="GO:0006952">
    <property type="term" value="P:defense response"/>
    <property type="evidence" value="ECO:0000315"/>
    <property type="project" value="Gramene"/>
</dbReference>
<dbReference type="GO" id="GO:0050832">
    <property type="term" value="P:defense response to fungus"/>
    <property type="evidence" value="ECO:0007669"/>
    <property type="project" value="EnsemblPlants"/>
</dbReference>
<dbReference type="GO" id="GO:0009740">
    <property type="term" value="P:gibberellic acid mediated signaling pathway"/>
    <property type="evidence" value="ECO:0007669"/>
    <property type="project" value="UniProtKB-KW"/>
</dbReference>
<dbReference type="GO" id="GO:0009685">
    <property type="term" value="P:gibberellin metabolic process"/>
    <property type="evidence" value="ECO:0000270"/>
    <property type="project" value="Gramene"/>
</dbReference>
<dbReference type="GO" id="GO:0045892">
    <property type="term" value="P:negative regulation of DNA-templated transcription"/>
    <property type="evidence" value="ECO:0007669"/>
    <property type="project" value="EnsemblPlants"/>
</dbReference>
<dbReference type="GO" id="GO:0009938">
    <property type="term" value="P:negative regulation of gibberellic acid mediated signaling pathway"/>
    <property type="evidence" value="ECO:0000314"/>
    <property type="project" value="UniProtKB"/>
</dbReference>
<dbReference type="GO" id="GO:0031347">
    <property type="term" value="P:regulation of defense response"/>
    <property type="evidence" value="ECO:0000315"/>
    <property type="project" value="UniProtKB"/>
</dbReference>
<dbReference type="GO" id="GO:0006355">
    <property type="term" value="P:regulation of DNA-templated transcription"/>
    <property type="evidence" value="ECO:0000314"/>
    <property type="project" value="Gramene"/>
</dbReference>
<dbReference type="GO" id="GO:0009737">
    <property type="term" value="P:response to abscisic acid"/>
    <property type="evidence" value="ECO:0000270"/>
    <property type="project" value="UniProtKB"/>
</dbReference>
<dbReference type="GO" id="GO:0009617">
    <property type="term" value="P:response to bacterium"/>
    <property type="evidence" value="ECO:0000270"/>
    <property type="project" value="UniProtKB"/>
</dbReference>
<dbReference type="GO" id="GO:0010200">
    <property type="term" value="P:response to chitin"/>
    <property type="evidence" value="ECO:0000250"/>
    <property type="project" value="UniProtKB"/>
</dbReference>
<dbReference type="GO" id="GO:0009409">
    <property type="term" value="P:response to cold"/>
    <property type="evidence" value="ECO:0007669"/>
    <property type="project" value="EnsemblPlants"/>
</dbReference>
<dbReference type="GO" id="GO:0009723">
    <property type="term" value="P:response to ethylene"/>
    <property type="evidence" value="ECO:0000270"/>
    <property type="project" value="UniProtKB"/>
</dbReference>
<dbReference type="GO" id="GO:0009739">
    <property type="term" value="P:response to gibberellin"/>
    <property type="evidence" value="ECO:0000314"/>
    <property type="project" value="UniProtKB"/>
</dbReference>
<dbReference type="GO" id="GO:0009753">
    <property type="term" value="P:response to jasmonic acid"/>
    <property type="evidence" value="ECO:0000270"/>
    <property type="project" value="UniProtKB"/>
</dbReference>
<dbReference type="GO" id="GO:0002237">
    <property type="term" value="P:response to molecule of bacterial origin"/>
    <property type="evidence" value="ECO:0007669"/>
    <property type="project" value="EnsemblPlants"/>
</dbReference>
<dbReference type="GO" id="GO:0002238">
    <property type="term" value="P:response to molecule of fungal origin"/>
    <property type="evidence" value="ECO:0007669"/>
    <property type="project" value="EnsemblPlants"/>
</dbReference>
<dbReference type="GO" id="GO:0009751">
    <property type="term" value="P:response to salicylic acid"/>
    <property type="evidence" value="ECO:0000270"/>
    <property type="project" value="UniProtKB"/>
</dbReference>
<dbReference type="GO" id="GO:0009651">
    <property type="term" value="P:response to salt stress"/>
    <property type="evidence" value="ECO:0007669"/>
    <property type="project" value="EnsemblPlants"/>
</dbReference>
<dbReference type="GO" id="GO:0009414">
    <property type="term" value="P:response to water deprivation"/>
    <property type="evidence" value="ECO:0007669"/>
    <property type="project" value="EnsemblPlants"/>
</dbReference>
<dbReference type="GO" id="GO:0009611">
    <property type="term" value="P:response to wounding"/>
    <property type="evidence" value="ECO:0000270"/>
    <property type="project" value="UniProtKB"/>
</dbReference>
<dbReference type="FunFam" id="2.20.25.80:FF:000008">
    <property type="entry name" value="WRKY transcription factor 40"/>
    <property type="match status" value="1"/>
</dbReference>
<dbReference type="Gene3D" id="2.20.25.80">
    <property type="entry name" value="WRKY domain"/>
    <property type="match status" value="1"/>
</dbReference>
<dbReference type="InterPro" id="IPR003657">
    <property type="entry name" value="WRKY_dom"/>
</dbReference>
<dbReference type="InterPro" id="IPR036576">
    <property type="entry name" value="WRKY_dom_sf"/>
</dbReference>
<dbReference type="InterPro" id="IPR044810">
    <property type="entry name" value="WRKY_plant"/>
</dbReference>
<dbReference type="PANTHER" id="PTHR31429">
    <property type="entry name" value="WRKY TRANSCRIPTION FACTOR 36-RELATED"/>
    <property type="match status" value="1"/>
</dbReference>
<dbReference type="PANTHER" id="PTHR31429:SF114">
    <property type="entry name" value="WRKY TRANSCRIPTION FACTOR WRKY71"/>
    <property type="match status" value="1"/>
</dbReference>
<dbReference type="Pfam" id="PF03106">
    <property type="entry name" value="WRKY"/>
    <property type="match status" value="1"/>
</dbReference>
<dbReference type="SMART" id="SM00774">
    <property type="entry name" value="WRKY"/>
    <property type="match status" value="1"/>
</dbReference>
<dbReference type="SUPFAM" id="SSF118290">
    <property type="entry name" value="WRKY DNA-binding domain"/>
    <property type="match status" value="1"/>
</dbReference>
<dbReference type="PROSITE" id="PS50811">
    <property type="entry name" value="WRKY"/>
    <property type="match status" value="1"/>
</dbReference>
<evidence type="ECO:0000250" key="1">
    <source>
        <dbReference type="UniProtKB" id="Q6QHD1"/>
    </source>
</evidence>
<evidence type="ECO:0000255" key="2"/>
<evidence type="ECO:0000255" key="3">
    <source>
        <dbReference type="PROSITE-ProRule" id="PRU00223"/>
    </source>
</evidence>
<evidence type="ECO:0000256" key="4">
    <source>
        <dbReference type="SAM" id="MobiDB-lite"/>
    </source>
</evidence>
<evidence type="ECO:0000269" key="5">
    <source>
    </source>
</evidence>
<evidence type="ECO:0000269" key="6">
    <source>
    </source>
</evidence>
<evidence type="ECO:0000269" key="7">
    <source>
    </source>
</evidence>
<evidence type="ECO:0000303" key="8">
    <source>
    </source>
</evidence>
<evidence type="ECO:0000305" key="9"/>
<evidence type="ECO:0000312" key="10">
    <source>
        <dbReference type="EMBL" id="EAY84736.1"/>
    </source>
</evidence>
<feature type="chain" id="PRO_0000436959" description="WRKY transcription factor WRKY71">
    <location>
        <begin position="1"/>
        <end position="348"/>
    </location>
</feature>
<feature type="DNA-binding region" description="WRKY" evidence="1 3">
    <location>
        <begin position="187"/>
        <end position="253"/>
    </location>
</feature>
<feature type="region of interest" description="Disordered" evidence="4">
    <location>
        <begin position="91"/>
        <end position="141"/>
    </location>
</feature>
<feature type="region of interest" description="Disordered" evidence="4">
    <location>
        <begin position="246"/>
        <end position="287"/>
    </location>
</feature>
<feature type="region of interest" description="Transcription repression of gibberellic acid (GA)-induced promoters" evidence="1">
    <location>
        <begin position="267"/>
        <end position="348"/>
    </location>
</feature>
<feature type="coiled-coil region" evidence="2">
    <location>
        <begin position="50"/>
        <end position="84"/>
    </location>
</feature>
<feature type="short sequence motif" description="Nuclear localization signal" evidence="2">
    <location>
        <begin position="116"/>
        <end position="122"/>
    </location>
</feature>
<feature type="compositionally biased region" description="Low complexity" evidence="4">
    <location>
        <begin position="102"/>
        <end position="114"/>
    </location>
</feature>
<feature type="compositionally biased region" description="Pro residues" evidence="4">
    <location>
        <begin position="126"/>
        <end position="136"/>
    </location>
</feature>
<feature type="compositionally biased region" description="Pro residues" evidence="4">
    <location>
        <begin position="275"/>
        <end position="286"/>
    </location>
</feature>
<proteinExistence type="evidence at protein level"/>
<gene>
    <name evidence="8" type="primary">WRKY71</name>
    <name evidence="10" type="ORF">OsI_06106</name>
</gene>
<organism>
    <name type="scientific">Oryza sativa subsp. indica</name>
    <name type="common">Rice</name>
    <dbReference type="NCBI Taxonomy" id="39946"/>
    <lineage>
        <taxon>Eukaryota</taxon>
        <taxon>Viridiplantae</taxon>
        <taxon>Streptophyta</taxon>
        <taxon>Embryophyta</taxon>
        <taxon>Tracheophyta</taxon>
        <taxon>Spermatophyta</taxon>
        <taxon>Magnoliopsida</taxon>
        <taxon>Liliopsida</taxon>
        <taxon>Poales</taxon>
        <taxon>Poaceae</taxon>
        <taxon>BOP clade</taxon>
        <taxon>Oryzoideae</taxon>
        <taxon>Oryzeae</taxon>
        <taxon>Oryzinae</taxon>
        <taxon>Oryza</taxon>
        <taxon>Oryza sativa</taxon>
    </lineage>
</organism>